<name>LPXK_DESAL</name>
<keyword id="KW-0067">ATP-binding</keyword>
<keyword id="KW-0418">Kinase</keyword>
<keyword id="KW-0441">Lipid A biosynthesis</keyword>
<keyword id="KW-0444">Lipid biosynthesis</keyword>
<keyword id="KW-0443">Lipid metabolism</keyword>
<keyword id="KW-0547">Nucleotide-binding</keyword>
<keyword id="KW-1185">Reference proteome</keyword>
<keyword id="KW-0808">Transferase</keyword>
<accession>B8F928</accession>
<protein>
    <recommendedName>
        <fullName evidence="1">Tetraacyldisaccharide 4'-kinase</fullName>
        <ecNumber evidence="1">2.7.1.130</ecNumber>
    </recommendedName>
    <alternativeName>
        <fullName evidence="1">Lipid A 4'-kinase</fullName>
    </alternativeName>
</protein>
<proteinExistence type="inferred from homology"/>
<gene>
    <name evidence="1" type="primary">lpxK</name>
    <name type="ordered locus">Dalk_0351</name>
</gene>
<evidence type="ECO:0000255" key="1">
    <source>
        <dbReference type="HAMAP-Rule" id="MF_00409"/>
    </source>
</evidence>
<dbReference type="EC" id="2.7.1.130" evidence="1"/>
<dbReference type="EMBL" id="CP001322">
    <property type="protein sequence ID" value="ACL02060.1"/>
    <property type="molecule type" value="Genomic_DNA"/>
</dbReference>
<dbReference type="RefSeq" id="WP_012609500.1">
    <property type="nucleotide sequence ID" value="NC_011768.1"/>
</dbReference>
<dbReference type="SMR" id="B8F928"/>
<dbReference type="KEGG" id="dal:Dalk_0351"/>
<dbReference type="eggNOG" id="COG1663">
    <property type="taxonomic scope" value="Bacteria"/>
</dbReference>
<dbReference type="HOGENOM" id="CLU_038816_6_0_7"/>
<dbReference type="UniPathway" id="UPA00359">
    <property type="reaction ID" value="UER00482"/>
</dbReference>
<dbReference type="Proteomes" id="UP000000739">
    <property type="component" value="Chromosome"/>
</dbReference>
<dbReference type="GO" id="GO:0005886">
    <property type="term" value="C:plasma membrane"/>
    <property type="evidence" value="ECO:0007669"/>
    <property type="project" value="TreeGrafter"/>
</dbReference>
<dbReference type="GO" id="GO:0005524">
    <property type="term" value="F:ATP binding"/>
    <property type="evidence" value="ECO:0007669"/>
    <property type="project" value="UniProtKB-UniRule"/>
</dbReference>
<dbReference type="GO" id="GO:0009029">
    <property type="term" value="F:tetraacyldisaccharide 4'-kinase activity"/>
    <property type="evidence" value="ECO:0007669"/>
    <property type="project" value="UniProtKB-UniRule"/>
</dbReference>
<dbReference type="GO" id="GO:0009245">
    <property type="term" value="P:lipid A biosynthetic process"/>
    <property type="evidence" value="ECO:0007669"/>
    <property type="project" value="UniProtKB-UniRule"/>
</dbReference>
<dbReference type="GO" id="GO:0009244">
    <property type="term" value="P:lipopolysaccharide core region biosynthetic process"/>
    <property type="evidence" value="ECO:0007669"/>
    <property type="project" value="TreeGrafter"/>
</dbReference>
<dbReference type="HAMAP" id="MF_00409">
    <property type="entry name" value="LpxK"/>
    <property type="match status" value="1"/>
</dbReference>
<dbReference type="InterPro" id="IPR003758">
    <property type="entry name" value="LpxK"/>
</dbReference>
<dbReference type="InterPro" id="IPR027417">
    <property type="entry name" value="P-loop_NTPase"/>
</dbReference>
<dbReference type="NCBIfam" id="TIGR00682">
    <property type="entry name" value="lpxK"/>
    <property type="match status" value="1"/>
</dbReference>
<dbReference type="PANTHER" id="PTHR42724">
    <property type="entry name" value="TETRAACYLDISACCHARIDE 4'-KINASE"/>
    <property type="match status" value="1"/>
</dbReference>
<dbReference type="PANTHER" id="PTHR42724:SF1">
    <property type="entry name" value="TETRAACYLDISACCHARIDE 4'-KINASE, MITOCHONDRIAL-RELATED"/>
    <property type="match status" value="1"/>
</dbReference>
<dbReference type="Pfam" id="PF02606">
    <property type="entry name" value="LpxK"/>
    <property type="match status" value="1"/>
</dbReference>
<dbReference type="SUPFAM" id="SSF52540">
    <property type="entry name" value="P-loop containing nucleoside triphosphate hydrolases"/>
    <property type="match status" value="1"/>
</dbReference>
<organism>
    <name type="scientific">Desulfatibacillum aliphaticivorans</name>
    <dbReference type="NCBI Taxonomy" id="218208"/>
    <lineage>
        <taxon>Bacteria</taxon>
        <taxon>Pseudomonadati</taxon>
        <taxon>Thermodesulfobacteriota</taxon>
        <taxon>Desulfobacteria</taxon>
        <taxon>Desulfobacterales</taxon>
        <taxon>Desulfatibacillaceae</taxon>
        <taxon>Desulfatibacillum</taxon>
    </lineage>
</organism>
<comment type="function">
    <text evidence="1">Transfers the gamma-phosphate of ATP to the 4'-position of a tetraacyldisaccharide 1-phosphate intermediate (termed DS-1-P) to form tetraacyldisaccharide 1,4'-bis-phosphate (lipid IVA).</text>
</comment>
<comment type="catalytic activity">
    <reaction evidence="1">
        <text>a lipid A disaccharide + ATP = a lipid IVA + ADP + H(+)</text>
        <dbReference type="Rhea" id="RHEA:67840"/>
        <dbReference type="ChEBI" id="CHEBI:15378"/>
        <dbReference type="ChEBI" id="CHEBI:30616"/>
        <dbReference type="ChEBI" id="CHEBI:176343"/>
        <dbReference type="ChEBI" id="CHEBI:176425"/>
        <dbReference type="ChEBI" id="CHEBI:456216"/>
        <dbReference type="EC" id="2.7.1.130"/>
    </reaction>
</comment>
<comment type="pathway">
    <text evidence="1">Glycolipid biosynthesis; lipid IV(A) biosynthesis; lipid IV(A) from (3R)-3-hydroxytetradecanoyl-[acyl-carrier-protein] and UDP-N-acetyl-alpha-D-glucosamine: step 6/6.</text>
</comment>
<comment type="similarity">
    <text evidence="1">Belongs to the LpxK family.</text>
</comment>
<sequence length="368" mass="39907">MSSLRRRIETVMRSGPDENMGLTGAVLRLVSLVYGLVMRLRYKLYQKGFFKTGKAPCMVVSVGNITVGGTGKTPMAIYLARLFNDWGLNVAIASRGYGGTMQKQGGAASDGKDILLTPAEAGDEPWLMAVKLPGVPVVVGGDRVKSANLCASQFGTRILILDDAFSRLAIDRDLNLLLVDSQAPFGNGHVFPRGLLREPAEFASRADAVIRTRADRGAGQAALPQGKPVFSCTHKPKGFLEYFPQKGTSGPKIVRHSLDDLKGKKVAAFAGIADNQGFFDGLSSLGVAVLDRLSFPDHHAYTLRDRNIIVETAIKADVKALITTEKDLVRLTGWDAHGLDLYALEIALEFEQAQKFEDFLKSKLQIGE</sequence>
<reference key="1">
    <citation type="journal article" date="2012" name="Environ. Microbiol.">
        <title>The genome sequence of Desulfatibacillum alkenivorans AK-01: a blueprint for anaerobic alkane oxidation.</title>
        <authorList>
            <person name="Callaghan A.V."/>
            <person name="Morris B.E."/>
            <person name="Pereira I.A."/>
            <person name="McInerney M.J."/>
            <person name="Austin R.N."/>
            <person name="Groves J.T."/>
            <person name="Kukor J.J."/>
            <person name="Suflita J.M."/>
            <person name="Young L.Y."/>
            <person name="Zylstra G.J."/>
            <person name="Wawrik B."/>
        </authorList>
    </citation>
    <scope>NUCLEOTIDE SEQUENCE [LARGE SCALE GENOMIC DNA]</scope>
    <source>
        <strain>AK-01</strain>
    </source>
</reference>
<feature type="chain" id="PRO_1000205966" description="Tetraacyldisaccharide 4'-kinase">
    <location>
        <begin position="1"/>
        <end position="368"/>
    </location>
</feature>
<feature type="binding site" evidence="1">
    <location>
        <begin position="66"/>
        <end position="73"/>
    </location>
    <ligand>
        <name>ATP</name>
        <dbReference type="ChEBI" id="CHEBI:30616"/>
    </ligand>
</feature>